<evidence type="ECO:0000255" key="1"/>
<evidence type="ECO:0000255" key="2">
    <source>
        <dbReference type="PROSITE-ProRule" id="PRU00114"/>
    </source>
</evidence>
<evidence type="ECO:0000305" key="3"/>
<accession>P18211</accession>
<organism>
    <name type="scientific">Rattus norvegicus</name>
    <name type="common">Rat</name>
    <dbReference type="NCBI Taxonomy" id="10116"/>
    <lineage>
        <taxon>Eukaryota</taxon>
        <taxon>Metazoa</taxon>
        <taxon>Chordata</taxon>
        <taxon>Craniata</taxon>
        <taxon>Vertebrata</taxon>
        <taxon>Euteleostomi</taxon>
        <taxon>Mammalia</taxon>
        <taxon>Eutheria</taxon>
        <taxon>Euarchontoglires</taxon>
        <taxon>Glires</taxon>
        <taxon>Rodentia</taxon>
        <taxon>Myomorpha</taxon>
        <taxon>Muroidea</taxon>
        <taxon>Muridae</taxon>
        <taxon>Murinae</taxon>
        <taxon>Rattus</taxon>
    </lineage>
</organism>
<keyword id="KW-1064">Adaptive immunity</keyword>
<keyword id="KW-1015">Disulfide bond</keyword>
<keyword id="KW-0325">Glycoprotein</keyword>
<keyword id="KW-0391">Immunity</keyword>
<keyword id="KW-0472">Membrane</keyword>
<keyword id="KW-0491">MHC II</keyword>
<keyword id="KW-1185">Reference proteome</keyword>
<keyword id="KW-0732">Signal</keyword>
<keyword id="KW-0812">Transmembrane</keyword>
<keyword id="KW-1133">Transmembrane helix</keyword>
<protein>
    <recommendedName>
        <fullName>Rano class II histocompatibility antigen, D-1 beta chain</fullName>
    </recommendedName>
    <alternativeName>
        <fullName>RT1 class II histocompatibility antigen, D-1 beta chain</fullName>
    </alternativeName>
</protein>
<dbReference type="EMBL" id="X53054">
    <property type="protein sequence ID" value="CAA37221.1"/>
    <property type="molecule type" value="mRNA"/>
</dbReference>
<dbReference type="PIR" id="B60497">
    <property type="entry name" value="B60497"/>
</dbReference>
<dbReference type="PIR" id="S10989">
    <property type="entry name" value="S10989"/>
</dbReference>
<dbReference type="SMR" id="P18211"/>
<dbReference type="FunCoup" id="P18211">
    <property type="interactions" value="41"/>
</dbReference>
<dbReference type="STRING" id="10116.ENSRNOP00000000522"/>
<dbReference type="GlyCosmos" id="P18211">
    <property type="glycosylation" value="1 site, No reported glycans"/>
</dbReference>
<dbReference type="GlyGen" id="P18211">
    <property type="glycosylation" value="1 site"/>
</dbReference>
<dbReference type="iPTMnet" id="P18211"/>
<dbReference type="PhosphoSitePlus" id="P18211"/>
<dbReference type="PaxDb" id="10116-ENSRNOP00000000522"/>
<dbReference type="UCSC" id="RGD:1593282">
    <property type="organism name" value="rat"/>
</dbReference>
<dbReference type="AGR" id="RGD:1593282"/>
<dbReference type="RGD" id="1593282">
    <property type="gene designation" value="RT1-Db1"/>
</dbReference>
<dbReference type="eggNOG" id="ENOG502RYBQ">
    <property type="taxonomic scope" value="Eukaryota"/>
</dbReference>
<dbReference type="InParanoid" id="P18211"/>
<dbReference type="PhylomeDB" id="P18211"/>
<dbReference type="Reactome" id="R-RNO-202424">
    <property type="pathway name" value="Downstream TCR signaling"/>
</dbReference>
<dbReference type="Reactome" id="R-RNO-202427">
    <property type="pathway name" value="Phosphorylation of CD3 and TCR zeta chains"/>
</dbReference>
<dbReference type="Reactome" id="R-RNO-202430">
    <property type="pathway name" value="Translocation of ZAP-70 to Immunological synapse"/>
</dbReference>
<dbReference type="Reactome" id="R-RNO-202433">
    <property type="pathway name" value="Generation of second messenger molecules"/>
</dbReference>
<dbReference type="Reactome" id="R-RNO-2132295">
    <property type="pathway name" value="MHC class II antigen presentation"/>
</dbReference>
<dbReference type="Reactome" id="R-RNO-389948">
    <property type="pathway name" value="Co-inhibition by PD-1"/>
</dbReference>
<dbReference type="PRO" id="PR:P18211"/>
<dbReference type="Proteomes" id="UP000002494">
    <property type="component" value="Unplaced"/>
</dbReference>
<dbReference type="GO" id="GO:0009986">
    <property type="term" value="C:cell surface"/>
    <property type="evidence" value="ECO:0000266"/>
    <property type="project" value="RGD"/>
</dbReference>
<dbReference type="GO" id="GO:0009897">
    <property type="term" value="C:external side of plasma membrane"/>
    <property type="evidence" value="ECO:0000266"/>
    <property type="project" value="RGD"/>
</dbReference>
<dbReference type="GO" id="GO:0001772">
    <property type="term" value="C:immunological synapse"/>
    <property type="evidence" value="ECO:0000266"/>
    <property type="project" value="RGD"/>
</dbReference>
<dbReference type="GO" id="GO:0031902">
    <property type="term" value="C:late endosome membrane"/>
    <property type="evidence" value="ECO:0000266"/>
    <property type="project" value="RGD"/>
</dbReference>
<dbReference type="GO" id="GO:0005765">
    <property type="term" value="C:lysosomal membrane"/>
    <property type="evidence" value="ECO:0000266"/>
    <property type="project" value="RGD"/>
</dbReference>
<dbReference type="GO" id="GO:0042613">
    <property type="term" value="C:MHC class II protein complex"/>
    <property type="evidence" value="ECO:0000266"/>
    <property type="project" value="RGD"/>
</dbReference>
<dbReference type="GO" id="GO:0042609">
    <property type="term" value="F:CD4 receptor binding"/>
    <property type="evidence" value="ECO:0000266"/>
    <property type="project" value="RGD"/>
</dbReference>
<dbReference type="GO" id="GO:0023026">
    <property type="term" value="F:MHC class II protein complex binding"/>
    <property type="evidence" value="ECO:0000318"/>
    <property type="project" value="GO_Central"/>
</dbReference>
<dbReference type="GO" id="GO:0032395">
    <property type="term" value="F:MHC class II receptor activity"/>
    <property type="evidence" value="ECO:0000266"/>
    <property type="project" value="RGD"/>
</dbReference>
<dbReference type="GO" id="GO:0042605">
    <property type="term" value="F:peptide antigen binding"/>
    <property type="evidence" value="ECO:0000266"/>
    <property type="project" value="RGD"/>
</dbReference>
<dbReference type="GO" id="GO:0030247">
    <property type="term" value="F:polysaccharide binding"/>
    <property type="evidence" value="ECO:0000266"/>
    <property type="project" value="RGD"/>
</dbReference>
<dbReference type="GO" id="GO:0042608">
    <property type="term" value="F:T cell receptor binding"/>
    <property type="evidence" value="ECO:0000266"/>
    <property type="project" value="RGD"/>
</dbReference>
<dbReference type="GO" id="GO:0002491">
    <property type="term" value="P:antigen processing and presentation of endogenous peptide antigen via MHC class II"/>
    <property type="evidence" value="ECO:0000266"/>
    <property type="project" value="RGD"/>
</dbReference>
<dbReference type="GO" id="GO:0019886">
    <property type="term" value="P:antigen processing and presentation of exogenous peptide antigen via MHC class II"/>
    <property type="evidence" value="ECO:0000266"/>
    <property type="project" value="RGD"/>
</dbReference>
<dbReference type="GO" id="GO:0006959">
    <property type="term" value="P:humoral immune response"/>
    <property type="evidence" value="ECO:0000266"/>
    <property type="project" value="RGD"/>
</dbReference>
<dbReference type="GO" id="GO:0006955">
    <property type="term" value="P:immune response"/>
    <property type="evidence" value="ECO:0000266"/>
    <property type="project" value="RGD"/>
</dbReference>
<dbReference type="GO" id="GO:0002437">
    <property type="term" value="P:inflammatory response to antigenic stimulus"/>
    <property type="evidence" value="ECO:0000266"/>
    <property type="project" value="RGD"/>
</dbReference>
<dbReference type="GO" id="GO:0030225">
    <property type="term" value="P:macrophage differentiation"/>
    <property type="evidence" value="ECO:0000266"/>
    <property type="project" value="RGD"/>
</dbReference>
<dbReference type="GO" id="GO:0002469">
    <property type="term" value="P:myeloid dendritic cell antigen processing and presentation"/>
    <property type="evidence" value="ECO:0000266"/>
    <property type="project" value="RGD"/>
</dbReference>
<dbReference type="GO" id="GO:0002862">
    <property type="term" value="P:negative regulation of inflammatory response to antigenic stimulus"/>
    <property type="evidence" value="ECO:0000266"/>
    <property type="project" value="RGD"/>
</dbReference>
<dbReference type="GO" id="GO:0042130">
    <property type="term" value="P:negative regulation of T cell proliferation"/>
    <property type="evidence" value="ECO:0000266"/>
    <property type="project" value="RGD"/>
</dbReference>
<dbReference type="GO" id="GO:0032689">
    <property type="term" value="P:negative regulation of type II interferon production"/>
    <property type="evidence" value="ECO:0000266"/>
    <property type="project" value="RGD"/>
</dbReference>
<dbReference type="GO" id="GO:0002503">
    <property type="term" value="P:peptide antigen assembly with MHC class II protein complex"/>
    <property type="evidence" value="ECO:0000266"/>
    <property type="project" value="RGD"/>
</dbReference>
<dbReference type="GO" id="GO:0043123">
    <property type="term" value="P:positive regulation of canonical NF-kappaB signal transduction"/>
    <property type="evidence" value="ECO:0000266"/>
    <property type="project" value="RGD"/>
</dbReference>
<dbReference type="GO" id="GO:2000516">
    <property type="term" value="P:positive regulation of CD4-positive, alpha-beta T cell activation"/>
    <property type="evidence" value="ECO:0000266"/>
    <property type="project" value="RGD"/>
</dbReference>
<dbReference type="GO" id="GO:0032831">
    <property type="term" value="P:positive regulation of CD4-positive, CD25-positive, alpha-beta regulatory T cell differentiation"/>
    <property type="evidence" value="ECO:0000266"/>
    <property type="project" value="RGD"/>
</dbReference>
<dbReference type="GO" id="GO:0045893">
    <property type="term" value="P:positive regulation of DNA-templated transcription"/>
    <property type="evidence" value="ECO:0000266"/>
    <property type="project" value="RGD"/>
</dbReference>
<dbReference type="GO" id="GO:0070374">
    <property type="term" value="P:positive regulation of ERK1 and ERK2 cascade"/>
    <property type="evidence" value="ECO:0000266"/>
    <property type="project" value="RGD"/>
</dbReference>
<dbReference type="GO" id="GO:0050778">
    <property type="term" value="P:positive regulation of immune response"/>
    <property type="evidence" value="ECO:0000318"/>
    <property type="project" value="GO_Central"/>
</dbReference>
<dbReference type="GO" id="GO:0035774">
    <property type="term" value="P:positive regulation of insulin secretion involved in cellular response to glucose stimulus"/>
    <property type="evidence" value="ECO:0000266"/>
    <property type="project" value="RGD"/>
</dbReference>
<dbReference type="GO" id="GO:0043410">
    <property type="term" value="P:positive regulation of MAPK cascade"/>
    <property type="evidence" value="ECO:0000266"/>
    <property type="project" value="RGD"/>
</dbReference>
<dbReference type="GO" id="GO:0043382">
    <property type="term" value="P:positive regulation of memory T cell differentiation"/>
    <property type="evidence" value="ECO:0000266"/>
    <property type="project" value="RGD"/>
</dbReference>
<dbReference type="GO" id="GO:0045657">
    <property type="term" value="P:positive regulation of monocyte differentiation"/>
    <property type="evidence" value="ECO:0000266"/>
    <property type="project" value="RGD"/>
</dbReference>
<dbReference type="GO" id="GO:0050870">
    <property type="term" value="P:positive regulation of T cell activation"/>
    <property type="evidence" value="ECO:0000318"/>
    <property type="project" value="GO_Central"/>
</dbReference>
<dbReference type="GO" id="GO:0001916">
    <property type="term" value="P:positive regulation of T cell mediated cytotoxicity"/>
    <property type="evidence" value="ECO:0000266"/>
    <property type="project" value="RGD"/>
</dbReference>
<dbReference type="GO" id="GO:0002842">
    <property type="term" value="P:positive regulation of T cell mediated immune response to tumor cell"/>
    <property type="evidence" value="ECO:0000266"/>
    <property type="project" value="RGD"/>
</dbReference>
<dbReference type="GO" id="GO:0046598">
    <property type="term" value="P:positive regulation of viral entry into host cell"/>
    <property type="evidence" value="ECO:0000266"/>
    <property type="project" value="RGD"/>
</dbReference>
<dbReference type="GO" id="GO:0051262">
    <property type="term" value="P:protein tetramerization"/>
    <property type="evidence" value="ECO:0000266"/>
    <property type="project" value="RGD"/>
</dbReference>
<dbReference type="GO" id="GO:0032653">
    <property type="term" value="P:regulation of interleukin-10 production"/>
    <property type="evidence" value="ECO:0000266"/>
    <property type="project" value="RGD"/>
</dbReference>
<dbReference type="GO" id="GO:0032673">
    <property type="term" value="P:regulation of interleukin-4 production"/>
    <property type="evidence" value="ECO:0000266"/>
    <property type="project" value="RGD"/>
</dbReference>
<dbReference type="GO" id="GO:0045622">
    <property type="term" value="P:regulation of T-helper cell differentiation"/>
    <property type="evidence" value="ECO:0000266"/>
    <property type="project" value="RGD"/>
</dbReference>
<dbReference type="GO" id="GO:0071548">
    <property type="term" value="P:response to dexamethasone"/>
    <property type="evidence" value="ECO:0000270"/>
    <property type="project" value="RGD"/>
</dbReference>
<dbReference type="GO" id="GO:0007165">
    <property type="term" value="P:signal transduction"/>
    <property type="evidence" value="ECO:0000266"/>
    <property type="project" value="RGD"/>
</dbReference>
<dbReference type="GO" id="GO:0050852">
    <property type="term" value="P:T cell receptor signaling pathway"/>
    <property type="evidence" value="ECO:0000266"/>
    <property type="project" value="RGD"/>
</dbReference>
<dbReference type="GO" id="GO:0042088">
    <property type="term" value="P:T-helper 1 type immune response"/>
    <property type="evidence" value="ECO:0000266"/>
    <property type="project" value="RGD"/>
</dbReference>
<dbReference type="FunFam" id="2.60.40.10:FF:000116">
    <property type="entry name" value="HLA class II histocompatibility antigen, DRB1-1 beta chain"/>
    <property type="match status" value="1"/>
</dbReference>
<dbReference type="FunFam" id="3.10.320.10:FF:000001">
    <property type="entry name" value="HLA class II histocompatibility antigen, DRB1-1 beta chain"/>
    <property type="match status" value="1"/>
</dbReference>
<dbReference type="Gene3D" id="3.10.320.10">
    <property type="entry name" value="Class II Histocompatibility Antigen, M Beta Chain, Chain B, domain 1"/>
    <property type="match status" value="1"/>
</dbReference>
<dbReference type="Gene3D" id="2.60.40.10">
    <property type="entry name" value="Immunoglobulins"/>
    <property type="match status" value="1"/>
</dbReference>
<dbReference type="InterPro" id="IPR007110">
    <property type="entry name" value="Ig-like_dom"/>
</dbReference>
<dbReference type="InterPro" id="IPR036179">
    <property type="entry name" value="Ig-like_dom_sf"/>
</dbReference>
<dbReference type="InterPro" id="IPR013783">
    <property type="entry name" value="Ig-like_fold"/>
</dbReference>
<dbReference type="InterPro" id="IPR003006">
    <property type="entry name" value="Ig/MHC_CS"/>
</dbReference>
<dbReference type="InterPro" id="IPR003597">
    <property type="entry name" value="Ig_C1-set"/>
</dbReference>
<dbReference type="InterPro" id="IPR050160">
    <property type="entry name" value="MHC/Immunoglobulin"/>
</dbReference>
<dbReference type="InterPro" id="IPR011162">
    <property type="entry name" value="MHC_I/II-like_Ag-recog"/>
</dbReference>
<dbReference type="InterPro" id="IPR014745">
    <property type="entry name" value="MHC_II_a/b_N"/>
</dbReference>
<dbReference type="InterPro" id="IPR000353">
    <property type="entry name" value="MHC_II_b_N"/>
</dbReference>
<dbReference type="PANTHER" id="PTHR19944:SF99">
    <property type="entry name" value="HLA CLASS II HISTOCOMPATIBILITY ANTIGEN, DRB1 BETA CHAIN"/>
    <property type="match status" value="1"/>
</dbReference>
<dbReference type="PANTHER" id="PTHR19944">
    <property type="entry name" value="MHC CLASS II-RELATED"/>
    <property type="match status" value="1"/>
</dbReference>
<dbReference type="Pfam" id="PF07654">
    <property type="entry name" value="C1-set"/>
    <property type="match status" value="1"/>
</dbReference>
<dbReference type="Pfam" id="PF00969">
    <property type="entry name" value="MHC_II_beta"/>
    <property type="match status" value="1"/>
</dbReference>
<dbReference type="SMART" id="SM00407">
    <property type="entry name" value="IGc1"/>
    <property type="match status" value="1"/>
</dbReference>
<dbReference type="SMART" id="SM00921">
    <property type="entry name" value="MHC_II_beta"/>
    <property type="match status" value="1"/>
</dbReference>
<dbReference type="SUPFAM" id="SSF48726">
    <property type="entry name" value="Immunoglobulin"/>
    <property type="match status" value="1"/>
</dbReference>
<dbReference type="SUPFAM" id="SSF54452">
    <property type="entry name" value="MHC antigen-recognition domain"/>
    <property type="match status" value="1"/>
</dbReference>
<dbReference type="PROSITE" id="PS50835">
    <property type="entry name" value="IG_LIKE"/>
    <property type="match status" value="1"/>
</dbReference>
<dbReference type="PROSITE" id="PS00290">
    <property type="entry name" value="IG_MHC"/>
    <property type="match status" value="1"/>
</dbReference>
<sequence>MVWLARDSCVAAVILLLTVLSPPVALVRDPTPRFLEQVKGECHFYNGTQRVRFLARYIYNREEYTRFDSDVGEFRAVTELGRPSAEYYNKQKEYMEQLRATVDTACKHDYEISESFLVPRTVEPKVTVYPSKTQPLEHHNLLVCSVSDFYPGSVEVRWFRNGEEEKDGLVSTGLIRNGDWTFQLLVMLETVPQGGEVYTCQVEHPSLPSPVRVEWKAQSTSAQNKKMSGVGGIVLGLLFLGAGLFVYFRNQKGQSGLQPTGLLN</sequence>
<name>HB2D_RAT</name>
<reference key="1">
    <citation type="journal article" date="1990" name="Nucleic Acids Res.">
        <title>Sequence of rat cDNA clone pLR beta 112 coding for the RT1.D beta I chain.</title>
        <authorList>
            <person name="Syha-Jedelhauser J."/>
            <person name="Reske K."/>
        </authorList>
    </citation>
    <scope>NUCLEOTIDE SEQUENCE [MRNA]</scope>
    <source>
        <strain>Lewis familiaris</strain>
        <tissue>Bone marrow</tissue>
    </source>
</reference>
<feature type="signal peptide">
    <location>
        <begin position="1"/>
        <end position="26"/>
    </location>
</feature>
<feature type="chain" id="PRO_0000019006" description="Rano class II histocompatibility antigen, D-1 beta chain">
    <location>
        <begin position="27"/>
        <end position="264"/>
    </location>
</feature>
<feature type="topological domain" description="Extracellular" evidence="1">
    <location>
        <begin position="27"/>
        <end position="226"/>
    </location>
</feature>
<feature type="transmembrane region" description="Helical" evidence="1">
    <location>
        <begin position="227"/>
        <end position="248"/>
    </location>
</feature>
<feature type="topological domain" description="Cytoplasmic" evidence="1">
    <location>
        <begin position="249"/>
        <end position="264"/>
    </location>
</feature>
<feature type="domain" description="Ig-like C1-type">
    <location>
        <begin position="124"/>
        <end position="228"/>
    </location>
</feature>
<feature type="region of interest" description="Beta-1">
    <location>
        <begin position="27"/>
        <end position="120"/>
    </location>
</feature>
<feature type="region of interest" description="Beta-2">
    <location>
        <begin position="121"/>
        <end position="215"/>
    </location>
</feature>
<feature type="region of interest" description="Connecting peptide">
    <location>
        <begin position="216"/>
        <end position="226"/>
    </location>
</feature>
<feature type="glycosylation site" description="N-linked (GlcNAc...) asparagine" evidence="1">
    <location>
        <position position="46"/>
    </location>
</feature>
<feature type="disulfide bond" evidence="2">
    <location>
        <begin position="42"/>
        <end position="106"/>
    </location>
</feature>
<feature type="disulfide bond" evidence="2">
    <location>
        <begin position="144"/>
        <end position="200"/>
    </location>
</feature>
<gene>
    <name type="primary">RT1-Db1</name>
</gene>
<comment type="function">
    <text>Involved in the presentation of foreign antigens to the immune system.</text>
</comment>
<comment type="subcellular location">
    <subcellularLocation>
        <location evidence="3">Membrane</location>
        <topology evidence="3">Single-pass type I membrane protein</topology>
    </subcellularLocation>
</comment>
<comment type="similarity">
    <text evidence="3">Belongs to the MHC class II family.</text>
</comment>
<proteinExistence type="evidence at transcript level"/>